<keyword id="KW-0227">DNA damage</keyword>
<keyword id="KW-0234">DNA repair</keyword>
<keyword id="KW-1185">Reference proteome</keyword>
<reference key="1">
    <citation type="journal article" date="2000" name="Science">
        <title>Complete genome sequence of Neisseria meningitidis serogroup B strain MC58.</title>
        <authorList>
            <person name="Tettelin H."/>
            <person name="Saunders N.J."/>
            <person name="Heidelberg J.F."/>
            <person name="Jeffries A.C."/>
            <person name="Nelson K.E."/>
            <person name="Eisen J.A."/>
            <person name="Ketchum K.A."/>
            <person name="Hood D.W."/>
            <person name="Peden J.F."/>
            <person name="Dodson R.J."/>
            <person name="Nelson W.C."/>
            <person name="Gwinn M.L."/>
            <person name="DeBoy R.T."/>
            <person name="Peterson J.D."/>
            <person name="Hickey E.K."/>
            <person name="Haft D.H."/>
            <person name="Salzberg S.L."/>
            <person name="White O."/>
            <person name="Fleischmann R.D."/>
            <person name="Dougherty B.A."/>
            <person name="Mason T.M."/>
            <person name="Ciecko A."/>
            <person name="Parksey D.S."/>
            <person name="Blair E."/>
            <person name="Cittone H."/>
            <person name="Clark E.B."/>
            <person name="Cotton M.D."/>
            <person name="Utterback T.R."/>
            <person name="Khouri H.M."/>
            <person name="Qin H."/>
            <person name="Vamathevan J.J."/>
            <person name="Gill J."/>
            <person name="Scarlato V."/>
            <person name="Masignani V."/>
            <person name="Pizza M."/>
            <person name="Grandi G."/>
            <person name="Sun L."/>
            <person name="Smith H.O."/>
            <person name="Fraser C.M."/>
            <person name="Moxon E.R."/>
            <person name="Rappuoli R."/>
            <person name="Venter J.C."/>
        </authorList>
    </citation>
    <scope>NUCLEOTIDE SEQUENCE [LARGE SCALE GENOMIC DNA]</scope>
    <source>
        <strain>ATCC BAA-335 / MC58</strain>
    </source>
</reference>
<name>MUTL_NEIMB</name>
<gene>
    <name evidence="1" type="primary">mutL</name>
    <name type="ordered locus">NMB1442</name>
</gene>
<sequence>MSRIAALPDHLVNQIAAGEVVERPANALKEIVENSIDAGATAIEVELAGGGIRLIRVSDNGGGIHPDDIELALHRHATSKIKTLNDLEHVASMGFRGEGLASIASVSRLTLTSRQNDSSHATQVKAEDGKLSSPTAAAHPVGTTIEAAELFFNTPARRKFLKSENTEYAHCATMLERLALAHPHIAFSLKRDGKQVFKLPAQSLHERIAAIVGEDFQTASLGIDSGNGALRLYGAIAKPTFAKGKTDKQYCFVNHRFVRDKVMLHAVKQAYRDVLHNALTPAFVLFLDLPPEAVDVNVHPTKTEIRFRDSQQVHQLVFHTLNKALADTRANLTESVGNAGEVLHDITGVVSTPMPSENDSENLFDSVSNYPTGNKSDTHNAFGSSGKTAPMPYQSAYAPQQRSLSLRESRAAMNTYAELYKKTDDIDLELSRFEQARFGNMPSETPAPQTDTPLSDGIPSQSELPPLGFAIAQLLGIYILAQAEDSLLLIDMHAAAERVNYEKMKRQRQENGNLQSQRLLIPVTFAASHEECAALADYAETLAGFGLELSDMGGNTLAVRAVPAMLGKADVVSLAKDVLNELAQVGSSQTIEEHENRILATMSCHGSIRAGRRLTLPEMNALLRDMENTPRSNQCNHGRPTWVKLTLKELDALFLRGQ</sequence>
<evidence type="ECO:0000255" key="1">
    <source>
        <dbReference type="HAMAP-Rule" id="MF_00149"/>
    </source>
</evidence>
<evidence type="ECO:0000256" key="2">
    <source>
        <dbReference type="SAM" id="MobiDB-lite"/>
    </source>
</evidence>
<protein>
    <recommendedName>
        <fullName evidence="1">DNA mismatch repair protein MutL</fullName>
    </recommendedName>
</protein>
<accession>Q9JYT2</accession>
<comment type="function">
    <text evidence="1">This protein is involved in the repair of mismatches in DNA. It is required for dam-dependent methyl-directed DNA mismatch repair. May act as a 'molecular matchmaker', a protein that promotes the formation of a stable complex between two or more DNA-binding proteins in an ATP-dependent manner without itself being part of a final effector complex.</text>
</comment>
<comment type="similarity">
    <text evidence="1">Belongs to the DNA mismatch repair MutL/HexB family.</text>
</comment>
<dbReference type="EMBL" id="AE002098">
    <property type="protein sequence ID" value="AAF41803.1"/>
    <property type="molecule type" value="Genomic_DNA"/>
</dbReference>
<dbReference type="PIR" id="B81084">
    <property type="entry name" value="B81084"/>
</dbReference>
<dbReference type="RefSeq" id="NP_274454.1">
    <property type="nucleotide sequence ID" value="NC_003112.2"/>
</dbReference>
<dbReference type="RefSeq" id="WP_002222285.1">
    <property type="nucleotide sequence ID" value="NC_003112.2"/>
</dbReference>
<dbReference type="SMR" id="Q9JYT2"/>
<dbReference type="FunCoup" id="Q9JYT2">
    <property type="interactions" value="245"/>
</dbReference>
<dbReference type="STRING" id="122586.NMB1442"/>
<dbReference type="PaxDb" id="122586-NMB1442"/>
<dbReference type="KEGG" id="nme:NMB1442"/>
<dbReference type="PATRIC" id="fig|122586.8.peg.1811"/>
<dbReference type="HOGENOM" id="CLU_004131_4_2_4"/>
<dbReference type="InParanoid" id="Q9JYT2"/>
<dbReference type="OrthoDB" id="9763467at2"/>
<dbReference type="Proteomes" id="UP000000425">
    <property type="component" value="Chromosome"/>
</dbReference>
<dbReference type="GO" id="GO:0032300">
    <property type="term" value="C:mismatch repair complex"/>
    <property type="evidence" value="ECO:0000318"/>
    <property type="project" value="GO_Central"/>
</dbReference>
<dbReference type="GO" id="GO:0005524">
    <property type="term" value="F:ATP binding"/>
    <property type="evidence" value="ECO:0007669"/>
    <property type="project" value="InterPro"/>
</dbReference>
<dbReference type="GO" id="GO:0016887">
    <property type="term" value="F:ATP hydrolysis activity"/>
    <property type="evidence" value="ECO:0000318"/>
    <property type="project" value="GO_Central"/>
</dbReference>
<dbReference type="GO" id="GO:0140664">
    <property type="term" value="F:ATP-dependent DNA damage sensor activity"/>
    <property type="evidence" value="ECO:0007669"/>
    <property type="project" value="InterPro"/>
</dbReference>
<dbReference type="GO" id="GO:0030983">
    <property type="term" value="F:mismatched DNA binding"/>
    <property type="evidence" value="ECO:0007669"/>
    <property type="project" value="InterPro"/>
</dbReference>
<dbReference type="GO" id="GO:0006298">
    <property type="term" value="P:mismatch repair"/>
    <property type="evidence" value="ECO:0000318"/>
    <property type="project" value="GO_Central"/>
</dbReference>
<dbReference type="CDD" id="cd16926">
    <property type="entry name" value="HATPase_MutL-MLH-PMS-like"/>
    <property type="match status" value="1"/>
</dbReference>
<dbReference type="CDD" id="cd03482">
    <property type="entry name" value="MutL_Trans_MutL"/>
    <property type="match status" value="1"/>
</dbReference>
<dbReference type="FunFam" id="3.30.565.10:FF:000003">
    <property type="entry name" value="DNA mismatch repair endonuclease MutL"/>
    <property type="match status" value="1"/>
</dbReference>
<dbReference type="Gene3D" id="3.30.230.10">
    <property type="match status" value="1"/>
</dbReference>
<dbReference type="Gene3D" id="3.30.565.10">
    <property type="entry name" value="Histidine kinase-like ATPase, C-terminal domain"/>
    <property type="match status" value="1"/>
</dbReference>
<dbReference type="Gene3D" id="3.30.1540.20">
    <property type="entry name" value="MutL, C-terminal domain, dimerisation subdomain"/>
    <property type="match status" value="1"/>
</dbReference>
<dbReference type="Gene3D" id="3.30.1370.100">
    <property type="entry name" value="MutL, C-terminal domain, regulatory subdomain"/>
    <property type="match status" value="1"/>
</dbReference>
<dbReference type="HAMAP" id="MF_00149">
    <property type="entry name" value="DNA_mis_repair"/>
    <property type="match status" value="1"/>
</dbReference>
<dbReference type="InterPro" id="IPR014762">
    <property type="entry name" value="DNA_mismatch_repair_CS"/>
</dbReference>
<dbReference type="InterPro" id="IPR020667">
    <property type="entry name" value="DNA_mismatch_repair_MutL"/>
</dbReference>
<dbReference type="InterPro" id="IPR013507">
    <property type="entry name" value="DNA_mismatch_S5_2-like"/>
</dbReference>
<dbReference type="InterPro" id="IPR036890">
    <property type="entry name" value="HATPase_C_sf"/>
</dbReference>
<dbReference type="InterPro" id="IPR002099">
    <property type="entry name" value="MutL/Mlh/PMS"/>
</dbReference>
<dbReference type="InterPro" id="IPR038973">
    <property type="entry name" value="MutL/Mlh/Pms-like"/>
</dbReference>
<dbReference type="InterPro" id="IPR014790">
    <property type="entry name" value="MutL_C"/>
</dbReference>
<dbReference type="InterPro" id="IPR042120">
    <property type="entry name" value="MutL_C_dimsub"/>
</dbReference>
<dbReference type="InterPro" id="IPR042121">
    <property type="entry name" value="MutL_C_regsub"/>
</dbReference>
<dbReference type="InterPro" id="IPR037198">
    <property type="entry name" value="MutL_C_sf"/>
</dbReference>
<dbReference type="InterPro" id="IPR020568">
    <property type="entry name" value="Ribosomal_Su5_D2-typ_SF"/>
</dbReference>
<dbReference type="InterPro" id="IPR014721">
    <property type="entry name" value="Ribsml_uS5_D2-typ_fold_subgr"/>
</dbReference>
<dbReference type="NCBIfam" id="TIGR00585">
    <property type="entry name" value="mutl"/>
    <property type="match status" value="1"/>
</dbReference>
<dbReference type="NCBIfam" id="NF000949">
    <property type="entry name" value="PRK00095.1-2"/>
    <property type="match status" value="1"/>
</dbReference>
<dbReference type="PANTHER" id="PTHR10073">
    <property type="entry name" value="DNA MISMATCH REPAIR PROTEIN MLH, PMS, MUTL"/>
    <property type="match status" value="1"/>
</dbReference>
<dbReference type="PANTHER" id="PTHR10073:SF12">
    <property type="entry name" value="DNA MISMATCH REPAIR PROTEIN MLH1"/>
    <property type="match status" value="1"/>
</dbReference>
<dbReference type="Pfam" id="PF01119">
    <property type="entry name" value="DNA_mis_repair"/>
    <property type="match status" value="1"/>
</dbReference>
<dbReference type="Pfam" id="PF13589">
    <property type="entry name" value="HATPase_c_3"/>
    <property type="match status" value="1"/>
</dbReference>
<dbReference type="Pfam" id="PF08676">
    <property type="entry name" value="MutL_C"/>
    <property type="match status" value="1"/>
</dbReference>
<dbReference type="SMART" id="SM01340">
    <property type="entry name" value="DNA_mis_repair"/>
    <property type="match status" value="1"/>
</dbReference>
<dbReference type="SMART" id="SM00853">
    <property type="entry name" value="MutL_C"/>
    <property type="match status" value="1"/>
</dbReference>
<dbReference type="SUPFAM" id="SSF55874">
    <property type="entry name" value="ATPase domain of HSP90 chaperone/DNA topoisomerase II/histidine kinase"/>
    <property type="match status" value="1"/>
</dbReference>
<dbReference type="SUPFAM" id="SSF118116">
    <property type="entry name" value="DNA mismatch repair protein MutL"/>
    <property type="match status" value="1"/>
</dbReference>
<dbReference type="SUPFAM" id="SSF54211">
    <property type="entry name" value="Ribosomal protein S5 domain 2-like"/>
    <property type="match status" value="1"/>
</dbReference>
<dbReference type="PROSITE" id="PS00058">
    <property type="entry name" value="DNA_MISMATCH_REPAIR_1"/>
    <property type="match status" value="1"/>
</dbReference>
<feature type="chain" id="PRO_0000177956" description="DNA mismatch repair protein MutL">
    <location>
        <begin position="1"/>
        <end position="658"/>
    </location>
</feature>
<feature type="region of interest" description="Disordered" evidence="2">
    <location>
        <begin position="114"/>
        <end position="137"/>
    </location>
</feature>
<feature type="region of interest" description="Disordered" evidence="2">
    <location>
        <begin position="437"/>
        <end position="456"/>
    </location>
</feature>
<feature type="compositionally biased region" description="Polar residues" evidence="2">
    <location>
        <begin position="442"/>
        <end position="456"/>
    </location>
</feature>
<proteinExistence type="inferred from homology"/>
<organism>
    <name type="scientific">Neisseria meningitidis serogroup B (strain ATCC BAA-335 / MC58)</name>
    <dbReference type="NCBI Taxonomy" id="122586"/>
    <lineage>
        <taxon>Bacteria</taxon>
        <taxon>Pseudomonadati</taxon>
        <taxon>Pseudomonadota</taxon>
        <taxon>Betaproteobacteria</taxon>
        <taxon>Neisseriales</taxon>
        <taxon>Neisseriaceae</taxon>
        <taxon>Neisseria</taxon>
    </lineage>
</organism>